<keyword id="KW-0687">Ribonucleoprotein</keyword>
<keyword id="KW-0689">Ribosomal protein</keyword>
<feature type="chain" id="PRO_1000120683" description="Small ribosomal subunit protein bS21">
    <location>
        <begin position="1"/>
        <end position="71"/>
    </location>
</feature>
<feature type="region of interest" description="Disordered" evidence="2">
    <location>
        <begin position="43"/>
        <end position="71"/>
    </location>
</feature>
<feature type="compositionally biased region" description="Basic residues" evidence="2">
    <location>
        <begin position="46"/>
        <end position="59"/>
    </location>
</feature>
<feature type="compositionally biased region" description="Basic and acidic residues" evidence="2">
    <location>
        <begin position="60"/>
        <end position="71"/>
    </location>
</feature>
<protein>
    <recommendedName>
        <fullName evidence="1">Small ribosomal subunit protein bS21</fullName>
    </recommendedName>
    <alternativeName>
        <fullName evidence="3">30S ribosomal protein S21</fullName>
    </alternativeName>
</protein>
<sequence>MPVIKVRENEPFDVALRRFKRSCEKAGVLAEVRRREFYEKPTTERKRAKASAVKRHAKKLARENARRTRLY</sequence>
<reference key="1">
    <citation type="journal article" date="2010" name="J. Bacteriol.">
        <title>Genome sequence of the deep-rooted Yersinia pestis strain Angola reveals new insights into the evolution and pangenome of the plague bacterium.</title>
        <authorList>
            <person name="Eppinger M."/>
            <person name="Worsham P.L."/>
            <person name="Nikolich M.P."/>
            <person name="Riley D.R."/>
            <person name="Sebastian Y."/>
            <person name="Mou S."/>
            <person name="Achtman M."/>
            <person name="Lindler L.E."/>
            <person name="Ravel J."/>
        </authorList>
    </citation>
    <scope>NUCLEOTIDE SEQUENCE [LARGE SCALE GENOMIC DNA]</scope>
    <source>
        <strain>Angola</strain>
    </source>
</reference>
<comment type="similarity">
    <text evidence="1">Belongs to the bacterial ribosomal protein bS21 family.</text>
</comment>
<proteinExistence type="inferred from homology"/>
<evidence type="ECO:0000255" key="1">
    <source>
        <dbReference type="HAMAP-Rule" id="MF_00358"/>
    </source>
</evidence>
<evidence type="ECO:0000256" key="2">
    <source>
        <dbReference type="SAM" id="MobiDB-lite"/>
    </source>
</evidence>
<evidence type="ECO:0000305" key="3"/>
<gene>
    <name evidence="1" type="primary">rpsU</name>
    <name type="ordered locus">YpAngola_A0301</name>
</gene>
<organism>
    <name type="scientific">Yersinia pestis bv. Antiqua (strain Angola)</name>
    <dbReference type="NCBI Taxonomy" id="349746"/>
    <lineage>
        <taxon>Bacteria</taxon>
        <taxon>Pseudomonadati</taxon>
        <taxon>Pseudomonadota</taxon>
        <taxon>Gammaproteobacteria</taxon>
        <taxon>Enterobacterales</taxon>
        <taxon>Yersiniaceae</taxon>
        <taxon>Yersinia</taxon>
    </lineage>
</organism>
<name>RS21_YERPG</name>
<dbReference type="EMBL" id="CP000901">
    <property type="protein sequence ID" value="ABX87154.1"/>
    <property type="molecule type" value="Genomic_DNA"/>
</dbReference>
<dbReference type="RefSeq" id="WP_001144069.1">
    <property type="nucleotide sequence ID" value="NZ_CP009935.1"/>
</dbReference>
<dbReference type="SMR" id="A9R7E4"/>
<dbReference type="GeneID" id="98390195"/>
<dbReference type="KEGG" id="ypg:YpAngola_A0301"/>
<dbReference type="PATRIC" id="fig|349746.12.peg.1250"/>
<dbReference type="GO" id="GO:1990904">
    <property type="term" value="C:ribonucleoprotein complex"/>
    <property type="evidence" value="ECO:0007669"/>
    <property type="project" value="UniProtKB-KW"/>
</dbReference>
<dbReference type="GO" id="GO:0005840">
    <property type="term" value="C:ribosome"/>
    <property type="evidence" value="ECO:0007669"/>
    <property type="project" value="UniProtKB-KW"/>
</dbReference>
<dbReference type="GO" id="GO:0003735">
    <property type="term" value="F:structural constituent of ribosome"/>
    <property type="evidence" value="ECO:0007669"/>
    <property type="project" value="InterPro"/>
</dbReference>
<dbReference type="GO" id="GO:0006412">
    <property type="term" value="P:translation"/>
    <property type="evidence" value="ECO:0007669"/>
    <property type="project" value="UniProtKB-UniRule"/>
</dbReference>
<dbReference type="FunFam" id="1.20.5.1150:FF:000001">
    <property type="entry name" value="30S ribosomal protein S21"/>
    <property type="match status" value="1"/>
</dbReference>
<dbReference type="Gene3D" id="1.20.5.1150">
    <property type="entry name" value="Ribosomal protein S8"/>
    <property type="match status" value="1"/>
</dbReference>
<dbReference type="HAMAP" id="MF_00358">
    <property type="entry name" value="Ribosomal_bS21"/>
    <property type="match status" value="1"/>
</dbReference>
<dbReference type="InterPro" id="IPR001911">
    <property type="entry name" value="Ribosomal_bS21"/>
</dbReference>
<dbReference type="InterPro" id="IPR018278">
    <property type="entry name" value="Ribosomal_bS21_CS"/>
</dbReference>
<dbReference type="InterPro" id="IPR038380">
    <property type="entry name" value="Ribosomal_bS21_sf"/>
</dbReference>
<dbReference type="NCBIfam" id="TIGR00030">
    <property type="entry name" value="S21p"/>
    <property type="match status" value="1"/>
</dbReference>
<dbReference type="PANTHER" id="PTHR21109">
    <property type="entry name" value="MITOCHONDRIAL 28S RIBOSOMAL PROTEIN S21"/>
    <property type="match status" value="1"/>
</dbReference>
<dbReference type="PANTHER" id="PTHR21109:SF22">
    <property type="entry name" value="SMALL RIBOSOMAL SUBUNIT PROTEIN BS21"/>
    <property type="match status" value="1"/>
</dbReference>
<dbReference type="Pfam" id="PF01165">
    <property type="entry name" value="Ribosomal_S21"/>
    <property type="match status" value="1"/>
</dbReference>
<dbReference type="PRINTS" id="PR00976">
    <property type="entry name" value="RIBOSOMALS21"/>
</dbReference>
<dbReference type="PROSITE" id="PS01181">
    <property type="entry name" value="RIBOSOMAL_S21"/>
    <property type="match status" value="1"/>
</dbReference>
<accession>A9R7E4</accession>